<dbReference type="EMBL" id="CP001029">
    <property type="protein sequence ID" value="ACB80289.1"/>
    <property type="molecule type" value="Genomic_DNA"/>
</dbReference>
<dbReference type="RefSeq" id="WP_003597098.1">
    <property type="nucleotide sequence ID" value="NC_010725.1"/>
</dbReference>
<dbReference type="SMR" id="B1ZLK8"/>
<dbReference type="STRING" id="441620.Mpop_2127"/>
<dbReference type="GeneID" id="72989854"/>
<dbReference type="KEGG" id="mpo:Mpop_2127"/>
<dbReference type="eggNOG" id="COG0185">
    <property type="taxonomic scope" value="Bacteria"/>
</dbReference>
<dbReference type="HOGENOM" id="CLU_144911_0_1_5"/>
<dbReference type="OrthoDB" id="9797833at2"/>
<dbReference type="Proteomes" id="UP000007136">
    <property type="component" value="Chromosome"/>
</dbReference>
<dbReference type="GO" id="GO:0005737">
    <property type="term" value="C:cytoplasm"/>
    <property type="evidence" value="ECO:0007669"/>
    <property type="project" value="UniProtKB-ARBA"/>
</dbReference>
<dbReference type="GO" id="GO:0015935">
    <property type="term" value="C:small ribosomal subunit"/>
    <property type="evidence" value="ECO:0007669"/>
    <property type="project" value="InterPro"/>
</dbReference>
<dbReference type="GO" id="GO:0019843">
    <property type="term" value="F:rRNA binding"/>
    <property type="evidence" value="ECO:0007669"/>
    <property type="project" value="UniProtKB-UniRule"/>
</dbReference>
<dbReference type="GO" id="GO:0003735">
    <property type="term" value="F:structural constituent of ribosome"/>
    <property type="evidence" value="ECO:0007669"/>
    <property type="project" value="InterPro"/>
</dbReference>
<dbReference type="GO" id="GO:0000028">
    <property type="term" value="P:ribosomal small subunit assembly"/>
    <property type="evidence" value="ECO:0007669"/>
    <property type="project" value="TreeGrafter"/>
</dbReference>
<dbReference type="GO" id="GO:0006412">
    <property type="term" value="P:translation"/>
    <property type="evidence" value="ECO:0007669"/>
    <property type="project" value="UniProtKB-UniRule"/>
</dbReference>
<dbReference type="FunFam" id="3.30.860.10:FF:000001">
    <property type="entry name" value="30S ribosomal protein S19"/>
    <property type="match status" value="1"/>
</dbReference>
<dbReference type="Gene3D" id="3.30.860.10">
    <property type="entry name" value="30s Ribosomal Protein S19, Chain A"/>
    <property type="match status" value="1"/>
</dbReference>
<dbReference type="HAMAP" id="MF_00531">
    <property type="entry name" value="Ribosomal_uS19"/>
    <property type="match status" value="1"/>
</dbReference>
<dbReference type="InterPro" id="IPR002222">
    <property type="entry name" value="Ribosomal_uS19"/>
</dbReference>
<dbReference type="InterPro" id="IPR005732">
    <property type="entry name" value="Ribosomal_uS19_bac-type"/>
</dbReference>
<dbReference type="InterPro" id="IPR020934">
    <property type="entry name" value="Ribosomal_uS19_CS"/>
</dbReference>
<dbReference type="InterPro" id="IPR023575">
    <property type="entry name" value="Ribosomal_uS19_SF"/>
</dbReference>
<dbReference type="NCBIfam" id="TIGR01050">
    <property type="entry name" value="rpsS_bact"/>
    <property type="match status" value="1"/>
</dbReference>
<dbReference type="PANTHER" id="PTHR11880">
    <property type="entry name" value="RIBOSOMAL PROTEIN S19P FAMILY MEMBER"/>
    <property type="match status" value="1"/>
</dbReference>
<dbReference type="PANTHER" id="PTHR11880:SF8">
    <property type="entry name" value="SMALL RIBOSOMAL SUBUNIT PROTEIN US19M"/>
    <property type="match status" value="1"/>
</dbReference>
<dbReference type="Pfam" id="PF00203">
    <property type="entry name" value="Ribosomal_S19"/>
    <property type="match status" value="1"/>
</dbReference>
<dbReference type="PIRSF" id="PIRSF002144">
    <property type="entry name" value="Ribosomal_S19"/>
    <property type="match status" value="1"/>
</dbReference>
<dbReference type="PRINTS" id="PR00975">
    <property type="entry name" value="RIBOSOMALS19"/>
</dbReference>
<dbReference type="SUPFAM" id="SSF54570">
    <property type="entry name" value="Ribosomal protein S19"/>
    <property type="match status" value="1"/>
</dbReference>
<dbReference type="PROSITE" id="PS00323">
    <property type="entry name" value="RIBOSOMAL_S19"/>
    <property type="match status" value="1"/>
</dbReference>
<proteinExistence type="inferred from homology"/>
<feature type="chain" id="PRO_1000128002" description="Small ribosomal subunit protein uS19">
    <location>
        <begin position="1"/>
        <end position="92"/>
    </location>
</feature>
<protein>
    <recommendedName>
        <fullName evidence="1">Small ribosomal subunit protein uS19</fullName>
    </recommendedName>
    <alternativeName>
        <fullName evidence="2">30S ribosomal protein S19</fullName>
    </alternativeName>
</protein>
<sequence>MARSLWKGPFVDGYLLKKADAARGGSRNEVVKIWSRRSTILPQFVGITFGVHNGHKHIPVYVTEEMVGHKFGEFSPTRTFPGHAADKKAKRR</sequence>
<gene>
    <name evidence="1" type="primary">rpsS</name>
    <name type="ordered locus">Mpop_2127</name>
</gene>
<name>RS19_METPB</name>
<comment type="function">
    <text evidence="1">Protein S19 forms a complex with S13 that binds strongly to the 16S ribosomal RNA.</text>
</comment>
<comment type="similarity">
    <text evidence="1">Belongs to the universal ribosomal protein uS19 family.</text>
</comment>
<reference key="1">
    <citation type="submission" date="2008-04" db="EMBL/GenBank/DDBJ databases">
        <title>Complete sequence of chromosome of Methylobacterium populi BJ001.</title>
        <authorList>
            <consortium name="US DOE Joint Genome Institute"/>
            <person name="Copeland A."/>
            <person name="Lucas S."/>
            <person name="Lapidus A."/>
            <person name="Glavina del Rio T."/>
            <person name="Dalin E."/>
            <person name="Tice H."/>
            <person name="Bruce D."/>
            <person name="Goodwin L."/>
            <person name="Pitluck S."/>
            <person name="Chertkov O."/>
            <person name="Brettin T."/>
            <person name="Detter J.C."/>
            <person name="Han C."/>
            <person name="Kuske C.R."/>
            <person name="Schmutz J."/>
            <person name="Larimer F."/>
            <person name="Land M."/>
            <person name="Hauser L."/>
            <person name="Kyrpides N."/>
            <person name="Mikhailova N."/>
            <person name="Marx C."/>
            <person name="Richardson P."/>
        </authorList>
    </citation>
    <scope>NUCLEOTIDE SEQUENCE [LARGE SCALE GENOMIC DNA]</scope>
    <source>
        <strain>ATCC BAA-705 / NCIMB 13946 / BJ001</strain>
    </source>
</reference>
<organism>
    <name type="scientific">Methylorubrum populi (strain ATCC BAA-705 / NCIMB 13946 / BJ001)</name>
    <name type="common">Methylobacterium populi</name>
    <dbReference type="NCBI Taxonomy" id="441620"/>
    <lineage>
        <taxon>Bacteria</taxon>
        <taxon>Pseudomonadati</taxon>
        <taxon>Pseudomonadota</taxon>
        <taxon>Alphaproteobacteria</taxon>
        <taxon>Hyphomicrobiales</taxon>
        <taxon>Methylobacteriaceae</taxon>
        <taxon>Methylorubrum</taxon>
    </lineage>
</organism>
<keyword id="KW-0687">Ribonucleoprotein</keyword>
<keyword id="KW-0689">Ribosomal protein</keyword>
<keyword id="KW-0694">RNA-binding</keyword>
<keyword id="KW-0699">rRNA-binding</keyword>
<accession>B1ZLK8</accession>
<evidence type="ECO:0000255" key="1">
    <source>
        <dbReference type="HAMAP-Rule" id="MF_00531"/>
    </source>
</evidence>
<evidence type="ECO:0000305" key="2"/>